<name>VP4_ROTGI</name>
<sequence length="751" mass="85558">MLAYLRREWQSYGETVIAEGTFNSTSSDSSQSEKPIKTDGRYCYQAEIGRNAYSMDARGFMLGESDRHVDTTQFLPYTGYITDGIKYCNIEPPCGTLLRMHFDVSGDVSVDMHRVASIYVEVDSVTYDGSQYTIRGYRDRNLTATETQKKLIFYGFRKLGMIGMTGNGRVMLTSTIIQKISYKHQFTFQMHSESYVWGPCSGRIKTRVQGNDSRIIIYEQEDGFWKILKETLWIKLKPYFKPYGTMGGAFKNWLIDSGFEKHEYTYSYERDGQVVNATTVTYVKPTGKAGINQSWRPATDYNGQFTVLQPEDEFSVWYFEDKWQISQAIYAKNFQSDSQVEGELTNNGALIFKMNYIPSLAGITNKGGKVKYRYISGGFAQIDTSRHTGLAIILNFKCYGKKFYADNNNYPVDNALNPYICYIGDSYTLSGGTHYRQGACAGFAAGYDDEITEHDMTISYTVMKPSDPDFVTGGDNYGQTVTSDIERSIRDLQDQINSILAEMNIQQVTSAVFTAITNLGELPSLFSNITKVFNRAKDNIKKLRSRSNSDISPIGATKIIDKTTLETPQLSVINRMPEEYELGIIYNSMRTRKLIDERKHDFDTFAVATEMELPYISKVNTLTKEFKDYLKKPGLLSNDDVAVQIDPMNNRLSVLRRKYADIIEYKIDPELAHEVLSNMSNSATRSLFSLNVRKQIAMNNSFSEPTFSQIIDRMFDDGQLIDVLNNLNRETATELFDEFLTRIKSMLVKMS</sequence>
<proteinExistence type="inferred from homology"/>
<evidence type="ECO:0000250" key="1">
    <source>
        <dbReference type="UniProtKB" id="Q04916"/>
    </source>
</evidence>
<evidence type="ECO:0000255" key="2">
    <source>
        <dbReference type="HAMAP-Rule" id="MF_04125"/>
    </source>
</evidence>
<evidence type="ECO:0000305" key="3"/>
<organism>
    <name type="scientific">Rotavirus B (isolate RVB/Rat/United States/IDIR/1984/G1P[X])</name>
    <name type="common">RV-B</name>
    <name type="synonym">Rotavirus B (isolate infectious diarrhea of infant rats)</name>
    <dbReference type="NCBI Taxonomy" id="28877"/>
    <lineage>
        <taxon>Viruses</taxon>
        <taxon>Riboviria</taxon>
        <taxon>Orthornavirae</taxon>
        <taxon>Duplornaviricota</taxon>
        <taxon>Resentoviricetes</taxon>
        <taxon>Reovirales</taxon>
        <taxon>Sedoreoviridae</taxon>
        <taxon>Rotavirus</taxon>
        <taxon>Rotavirus B</taxon>
    </lineage>
</organism>
<reference key="1">
    <citation type="journal article" date="1989" name="Nucleic Acids Res.">
        <title>The complete nucleic acid sequence of gene segment 3 of the IDIR strain of group B rotavirus.</title>
        <authorList>
            <person name="Sato S."/>
            <person name="Yolken R.H."/>
            <person name="Eiden J.J."/>
        </authorList>
    </citation>
    <scope>NUCLEOTIDE SEQUENCE [GENOMIC RNA]</scope>
</reference>
<feature type="chain" id="PRO_0000149539" description="Outer capsid protein VP4" evidence="2">
    <location>
        <begin position="1"/>
        <end position="751"/>
    </location>
</feature>
<feature type="chain" id="PRO_0000369840" description="Outer capsid protein VP8*">
    <location>
        <begin position="1"/>
        <end position="207"/>
    </location>
</feature>
<feature type="chain" id="PRO_0000369841" description="Outer capsid protein VP5*">
    <location>
        <begin position="215"/>
        <end position="751"/>
    </location>
</feature>
<feature type="site" description="Probable cleavage" evidence="1">
    <location>
        <begin position="207"/>
        <end position="208"/>
    </location>
</feature>
<feature type="site" description="Probable cleavage" evidence="1">
    <location>
        <begin position="214"/>
        <end position="215"/>
    </location>
</feature>
<organismHost>
    <name type="scientific">Homo sapiens</name>
    <name type="common">Human</name>
    <dbReference type="NCBI Taxonomy" id="9606"/>
</organismHost>
<organismHost>
    <name type="scientific">Rattus norvegicus</name>
    <name type="common">Rat</name>
    <dbReference type="NCBI Taxonomy" id="10116"/>
</organismHost>
<comment type="function">
    <molecule>Outer capsid protein VP4</molecule>
    <text evidence="2">Spike-forming protein that mediates virion attachment to the host epithelial cell receptors and plays a major role in cell penetration, determination of host range restriction and virulence. Rotavirus attachment and entry into the host cell probably involves multiple sequential contacts between the outer capsid proteins VP4 and VP7, and the cell receptors. It is subsequently lost, together with VP7, following virus entry into the host cell. Following entry into the host cell, low intracellular or intravesicular Ca(2+) concentration probably causes the calcium-stabilized VP7 trimers to dissociate from the virion. This step is probably necessary for the membrane-disrupting entry step and the release of VP4, which is locked onto the virion by VP7.</text>
</comment>
<comment type="function">
    <molecule>Outer capsid protein VP5*</molecule>
    <text evidence="3">Forms the spike 'foot' and 'body' and acts as a membrane permeabilization protein that mediates release of viral particles from endosomal compartments into the cytoplasm. During entry, the part of VP5* that protrudes from the virus folds back on itself and reorganizes from a local dimer to a trimer. This reorganization may be linked to membrane penetration.</text>
</comment>
<comment type="function">
    <molecule>Outer capsid protein VP8*</molecule>
    <text evidence="3">Forms the head of the spikes and mediates the recognition of specific host cell surface glycans. It is the viral hemagglutinin and an important target of neutralizing antibodies.</text>
</comment>
<comment type="subunit">
    <molecule>Outer capsid protein VP4</molecule>
    <text evidence="3">Homotrimer. VP4 adopts a dimeric appearance above the capsid surface, while forming a trimeric base anchored inside the capsid layer. Only hints of the third molecule are observed above the capsid surface. It probably performs a series of molecular rearrangements during viral entry. Prior to trypsin cleavage, it is flexible. The priming trypsin cleavage triggers its rearrangement into rigid spikes with approximate two-fold symmetry of their protruding parts. After an unknown second triggering event, cleaved VP4 may undergo another rearrangement, in which two VP5* subunits fold back on themselves and join a third subunit to form a tightly associated trimer, shaped like a folded umbrella. Interacts with VP6. Interacts with VP7.</text>
</comment>
<comment type="subunit">
    <molecule>Outer capsid protein VP5*</molecule>
    <text evidence="3">Homotrimer. The trimer is coiled-coil stabilized by its C-terminus, however, its N-terminus, known as antigen domain or 'body', seems to be flexible allowing it to self-associate either as a dimer or a trimer.</text>
</comment>
<comment type="subcellular location">
    <molecule>Outer capsid protein VP4</molecule>
    <subcellularLocation>
        <location evidence="2">Virion</location>
    </subcellularLocation>
    <subcellularLocation>
        <location evidence="2">Host rough endoplasmic reticulum</location>
    </subcellularLocation>
    <subcellularLocation>
        <location evidence="2">Host cell membrane</location>
    </subcellularLocation>
    <subcellularLocation>
        <location evidence="2">Host endoplasmic reticulum-Golgi intermediate compartment</location>
    </subcellularLocation>
    <text evidence="2">The outer layer contains 180 copies of VP4, grouped as 60 dimers. Immature double-layered particles assembled in the cytoplasm bud across the membrane of the endoplasmic reticulum, acquiring during this process a transient lipid membrane that is modified with the ER resident viral glycoproteins NSP4 and VP7; these enveloped particles also contain VP4. As the particles move towards the interior of the ER cisternae, the transient lipid membrane and the non-structural protein NSP4 are lost, while the virus surface proteins VP4 and VP7 rearrange to form the outermost virus protein layer, yielding mature infectious triple-layered particles.</text>
</comment>
<comment type="domain">
    <molecule>Outer capsid protein VP4</molecule>
    <text evidence="2">The VP4 spike is divided into a foot, a stalk and body, and a head.</text>
</comment>
<comment type="PTM">
    <molecule>Outer capsid protein VP4</molecule>
    <text evidence="2">Proteolytic cleavage by trypsin results in activation of VP4 functions and greatly increases infectivity. The penetration into the host cell is dependent on trypsin treatment of VP4. It produces two peptides, VP5* and VP8* that remain associated with the virion. Cleavage of VP4 by trypsin probably occurs in vivo in the lumen of the intestine prior to infection of enterocytes. Trypsin seems to be incorporated into the three-layered viral particles but remains inactive as long as the viral outer capsid is intact and would only be activated upon the solubilization of the latter.</text>
</comment>
<comment type="similarity">
    <text evidence="2">Belongs to the rotavirus VP4 family.</text>
</comment>
<keyword id="KW-0167">Capsid protein</keyword>
<keyword id="KW-0348">Hemagglutinin</keyword>
<keyword id="KW-1032">Host cell membrane</keyword>
<keyword id="KW-1038">Host endoplasmic reticulum</keyword>
<keyword id="KW-1043">Host membrane</keyword>
<keyword id="KW-0945">Host-virus interaction</keyword>
<keyword id="KW-0472">Membrane</keyword>
<keyword id="KW-1152">Outer capsid protein</keyword>
<keyword id="KW-1161">Viral attachment to host cell</keyword>
<keyword id="KW-1162">Viral penetration into host cytoplasm</keyword>
<keyword id="KW-1173">Viral penetration via permeabilization of host membrane</keyword>
<keyword id="KW-0946">Virion</keyword>
<keyword id="KW-1160">Virus entry into host cell</keyword>
<accession>P15155</accession>
<protein>
    <recommendedName>
        <fullName evidence="2">Outer capsid protein VP4</fullName>
    </recommendedName>
    <alternativeName>
        <fullName evidence="2">Hemagglutinin</fullName>
    </alternativeName>
    <component>
        <recommendedName>
            <fullName evidence="3">Outer capsid protein VP8*</fullName>
        </recommendedName>
    </component>
    <component>
        <recommendedName>
            <fullName evidence="3">Outer capsid protein VP5*</fullName>
        </recommendedName>
    </component>
</protein>
<dbReference type="EMBL" id="X16949">
    <property type="protein sequence ID" value="CAA34823.1"/>
    <property type="molecule type" value="Genomic_RNA"/>
</dbReference>
<dbReference type="PIR" id="A33093">
    <property type="entry name" value="WMXRGB"/>
</dbReference>
<dbReference type="SMR" id="P15155"/>
<dbReference type="GO" id="GO:0044172">
    <property type="term" value="C:host cell endoplasmic reticulum-Golgi intermediate compartment"/>
    <property type="evidence" value="ECO:0007669"/>
    <property type="project" value="UniProtKB-SubCell"/>
</dbReference>
<dbReference type="GO" id="GO:0020002">
    <property type="term" value="C:host cell plasma membrane"/>
    <property type="evidence" value="ECO:0007669"/>
    <property type="project" value="UniProtKB-SubCell"/>
</dbReference>
<dbReference type="GO" id="GO:0044168">
    <property type="term" value="C:host cell rough endoplasmic reticulum"/>
    <property type="evidence" value="ECO:0007669"/>
    <property type="project" value="UniProtKB-SubCell"/>
</dbReference>
<dbReference type="GO" id="GO:0016020">
    <property type="term" value="C:membrane"/>
    <property type="evidence" value="ECO:0007669"/>
    <property type="project" value="UniProtKB-KW"/>
</dbReference>
<dbReference type="GO" id="GO:0039624">
    <property type="term" value="C:viral outer capsid"/>
    <property type="evidence" value="ECO:0007669"/>
    <property type="project" value="UniProtKB-UniRule"/>
</dbReference>
<dbReference type="GO" id="GO:0039665">
    <property type="term" value="P:permeabilization of host organelle membrane involved in viral entry into host cell"/>
    <property type="evidence" value="ECO:0007669"/>
    <property type="project" value="UniProtKB-UniRule"/>
</dbReference>
<dbReference type="GO" id="GO:0019062">
    <property type="term" value="P:virion attachment to host cell"/>
    <property type="evidence" value="ECO:0007669"/>
    <property type="project" value="UniProtKB-UniRule"/>
</dbReference>
<dbReference type="HAMAP" id="MF_04125">
    <property type="entry name" value="Rota_VP4"/>
    <property type="match status" value="1"/>
</dbReference>
<dbReference type="InterPro" id="IPR042546">
    <property type="entry name" value="Rota_A_VP4"/>
</dbReference>
<dbReference type="InterPro" id="IPR038017">
    <property type="entry name" value="Rota_VP4_MID_sf"/>
</dbReference>
<dbReference type="SUPFAM" id="SSF111379">
    <property type="entry name" value="VP4 membrane interaction domain"/>
    <property type="match status" value="1"/>
</dbReference>